<keyword id="KW-0150">Chloroplast</keyword>
<keyword id="KW-0934">Plastid</keyword>
<keyword id="KW-1185">Reference proteome</keyword>
<keyword id="KW-0687">Ribonucleoprotein</keyword>
<keyword id="KW-0689">Ribosomal protein</keyword>
<name>RK36_ORYSI</name>
<accession>P0C459</accession>
<gene>
    <name type="primary">rpl36</name>
</gene>
<comment type="subcellular location">
    <subcellularLocation>
        <location>Plastid</location>
        <location>Chloroplast</location>
    </subcellularLocation>
</comment>
<comment type="similarity">
    <text evidence="1">Belongs to the bacterial ribosomal protein bL36 family.</text>
</comment>
<organism>
    <name type="scientific">Oryza sativa subsp. indica</name>
    <name type="common">Rice</name>
    <dbReference type="NCBI Taxonomy" id="39946"/>
    <lineage>
        <taxon>Eukaryota</taxon>
        <taxon>Viridiplantae</taxon>
        <taxon>Streptophyta</taxon>
        <taxon>Embryophyta</taxon>
        <taxon>Tracheophyta</taxon>
        <taxon>Spermatophyta</taxon>
        <taxon>Magnoliopsida</taxon>
        <taxon>Liliopsida</taxon>
        <taxon>Poales</taxon>
        <taxon>Poaceae</taxon>
        <taxon>BOP clade</taxon>
        <taxon>Oryzoideae</taxon>
        <taxon>Oryzeae</taxon>
        <taxon>Oryzinae</taxon>
        <taxon>Oryza</taxon>
        <taxon>Oryza sativa</taxon>
    </lineage>
</organism>
<evidence type="ECO:0000305" key="1"/>
<proteinExistence type="inferred from homology"/>
<dbReference type="EMBL" id="AY522329">
    <property type="status" value="NOT_ANNOTATED_CDS"/>
    <property type="molecule type" value="Genomic_DNA"/>
</dbReference>
<dbReference type="RefSeq" id="YP_009161397.1">
    <property type="nucleotide sequence ID" value="NC_027678.1"/>
</dbReference>
<dbReference type="SMR" id="P0C459"/>
<dbReference type="STRING" id="39946.P0C459"/>
<dbReference type="Proteomes" id="UP000007015">
    <property type="component" value="Chloroplast"/>
</dbReference>
<dbReference type="GO" id="GO:0009507">
    <property type="term" value="C:chloroplast"/>
    <property type="evidence" value="ECO:0007669"/>
    <property type="project" value="UniProtKB-SubCell"/>
</dbReference>
<dbReference type="GO" id="GO:0009536">
    <property type="term" value="C:plastid"/>
    <property type="evidence" value="ECO:0000305"/>
    <property type="project" value="Gramene"/>
</dbReference>
<dbReference type="GO" id="GO:1990904">
    <property type="term" value="C:ribonucleoprotein complex"/>
    <property type="evidence" value="ECO:0007669"/>
    <property type="project" value="UniProtKB-KW"/>
</dbReference>
<dbReference type="GO" id="GO:0005840">
    <property type="term" value="C:ribosome"/>
    <property type="evidence" value="ECO:0007669"/>
    <property type="project" value="UniProtKB-KW"/>
</dbReference>
<dbReference type="GO" id="GO:0003735">
    <property type="term" value="F:structural constituent of ribosome"/>
    <property type="evidence" value="ECO:0007669"/>
    <property type="project" value="InterPro"/>
</dbReference>
<dbReference type="GO" id="GO:0006412">
    <property type="term" value="P:translation"/>
    <property type="evidence" value="ECO:0007669"/>
    <property type="project" value="UniProtKB-UniRule"/>
</dbReference>
<dbReference type="HAMAP" id="MF_00251">
    <property type="entry name" value="Ribosomal_bL36"/>
    <property type="match status" value="1"/>
</dbReference>
<dbReference type="InterPro" id="IPR000473">
    <property type="entry name" value="Ribosomal_bL36"/>
</dbReference>
<dbReference type="InterPro" id="IPR035977">
    <property type="entry name" value="Ribosomal_bL36_sp"/>
</dbReference>
<dbReference type="NCBIfam" id="TIGR01022">
    <property type="entry name" value="rpmJ_bact"/>
    <property type="match status" value="1"/>
</dbReference>
<dbReference type="PANTHER" id="PTHR42888">
    <property type="entry name" value="50S RIBOSOMAL PROTEIN L36, CHLOROPLASTIC"/>
    <property type="match status" value="1"/>
</dbReference>
<dbReference type="PANTHER" id="PTHR42888:SF1">
    <property type="entry name" value="LARGE RIBOSOMAL SUBUNIT PROTEIN BL36C"/>
    <property type="match status" value="1"/>
</dbReference>
<dbReference type="Pfam" id="PF00444">
    <property type="entry name" value="Ribosomal_L36"/>
    <property type="match status" value="1"/>
</dbReference>
<dbReference type="SUPFAM" id="SSF57840">
    <property type="entry name" value="Ribosomal protein L36"/>
    <property type="match status" value="1"/>
</dbReference>
<dbReference type="PROSITE" id="PS00828">
    <property type="entry name" value="RIBOSOMAL_L36"/>
    <property type="match status" value="1"/>
</dbReference>
<feature type="chain" id="PRO_0000290056" description="Large ribosomal subunit protein bL36c">
    <location>
        <begin position="1"/>
        <end position="37"/>
    </location>
</feature>
<reference key="1">
    <citation type="journal article" date="2004" name="Plant Physiol.">
        <title>A comparison of rice chloroplast genomes.</title>
        <authorList>
            <person name="Tang J."/>
            <person name="Xia H."/>
            <person name="Cao M."/>
            <person name="Zhang X."/>
            <person name="Zeng W."/>
            <person name="Hu S."/>
            <person name="Tong W."/>
            <person name="Wang J."/>
            <person name="Wang J."/>
            <person name="Yu J."/>
            <person name="Yang H."/>
            <person name="Zhu L."/>
        </authorList>
    </citation>
    <scope>NUCLEOTIDE SEQUENCE [LARGE SCALE GENOMIC DNA]</scope>
    <source>
        <strain>cv. 93-11</strain>
    </source>
</reference>
<sequence length="37" mass="4447">MKIRASVRKICTKCRLIRRRGRIRVICSNPKHKQRQG</sequence>
<protein>
    <recommendedName>
        <fullName evidence="1">Large ribosomal subunit protein bL36c</fullName>
    </recommendedName>
    <alternativeName>
        <fullName>50S ribosomal protein L36, chloroplastic</fullName>
    </alternativeName>
</protein>
<geneLocation type="chloroplast"/>